<feature type="chain" id="PRO_1000196878" description="Thiazole synthase">
    <location>
        <begin position="1"/>
        <end position="259"/>
    </location>
</feature>
<feature type="active site" description="Schiff-base intermediate with DXP" evidence="1">
    <location>
        <position position="99"/>
    </location>
</feature>
<feature type="binding site" evidence="1">
    <location>
        <position position="161"/>
    </location>
    <ligand>
        <name>1-deoxy-D-xylulose 5-phosphate</name>
        <dbReference type="ChEBI" id="CHEBI:57792"/>
    </ligand>
</feature>
<feature type="binding site" evidence="1">
    <location>
        <begin position="187"/>
        <end position="188"/>
    </location>
    <ligand>
        <name>1-deoxy-D-xylulose 5-phosphate</name>
        <dbReference type="ChEBI" id="CHEBI:57792"/>
    </ligand>
</feature>
<feature type="binding site" evidence="1">
    <location>
        <begin position="209"/>
        <end position="210"/>
    </location>
    <ligand>
        <name>1-deoxy-D-xylulose 5-phosphate</name>
        <dbReference type="ChEBI" id="CHEBI:57792"/>
    </ligand>
</feature>
<protein>
    <recommendedName>
        <fullName evidence="1">Thiazole synthase</fullName>
        <ecNumber evidence="1">2.8.1.10</ecNumber>
    </recommendedName>
</protein>
<gene>
    <name evidence="1" type="primary">thiG</name>
    <name type="ordered locus">NAMH_0083</name>
</gene>
<comment type="function">
    <text evidence="1">Catalyzes the rearrangement of 1-deoxy-D-xylulose 5-phosphate (DXP) to produce the thiazole phosphate moiety of thiamine. Sulfur is provided by the thiocarboxylate moiety of the carrier protein ThiS. In vitro, sulfur can be provided by H(2)S.</text>
</comment>
<comment type="catalytic activity">
    <reaction evidence="1">
        <text>[ThiS sulfur-carrier protein]-C-terminal-Gly-aminoethanethioate + 2-iminoacetate + 1-deoxy-D-xylulose 5-phosphate = [ThiS sulfur-carrier protein]-C-terminal Gly-Gly + 2-[(2R,5Z)-2-carboxy-4-methylthiazol-5(2H)-ylidene]ethyl phosphate + 2 H2O + H(+)</text>
        <dbReference type="Rhea" id="RHEA:26297"/>
        <dbReference type="Rhea" id="RHEA-COMP:12909"/>
        <dbReference type="Rhea" id="RHEA-COMP:19908"/>
        <dbReference type="ChEBI" id="CHEBI:15377"/>
        <dbReference type="ChEBI" id="CHEBI:15378"/>
        <dbReference type="ChEBI" id="CHEBI:57792"/>
        <dbReference type="ChEBI" id="CHEBI:62899"/>
        <dbReference type="ChEBI" id="CHEBI:77846"/>
        <dbReference type="ChEBI" id="CHEBI:90778"/>
        <dbReference type="ChEBI" id="CHEBI:232372"/>
        <dbReference type="EC" id="2.8.1.10"/>
    </reaction>
</comment>
<comment type="pathway">
    <text evidence="1">Cofactor biosynthesis; thiamine diphosphate biosynthesis.</text>
</comment>
<comment type="subunit">
    <text evidence="1">Homotetramer. Forms heterodimers with either ThiH or ThiS.</text>
</comment>
<comment type="subcellular location">
    <subcellularLocation>
        <location evidence="1">Cytoplasm</location>
    </subcellularLocation>
</comment>
<comment type="similarity">
    <text evidence="1">Belongs to the ThiG family.</text>
</comment>
<sequence length="259" mass="27705">MSDILKIGKYEFTSRLIVGSGKYPDFQTTRDATLASGAEMITVAVRRVNIMDPNEENLMDYFKDTDVKILPNSAGCTTAEEAITLFRLVREATGIDIIKLEVIGDTAKTLYPDVMETLKACEVLAKEDFTIMAYTNDDPIMAKRLENAGAHAVMPLAAPIGSGLGVQNRYNVVFVKDAVNVPVIVDAGIGTASDAAVAMELGADGVLTNTAIAQAKNPIAMAEAMKHAVIAGRMAYKAGRIPKKPYATASSPLEGLIEF</sequence>
<dbReference type="EC" id="2.8.1.10" evidence="1"/>
<dbReference type="EMBL" id="CP001279">
    <property type="protein sequence ID" value="ACM92456.1"/>
    <property type="molecule type" value="Genomic_DNA"/>
</dbReference>
<dbReference type="RefSeq" id="WP_012663827.1">
    <property type="nucleotide sequence ID" value="NC_012115.1"/>
</dbReference>
<dbReference type="SMR" id="B9L7B6"/>
<dbReference type="STRING" id="598659.NAMH_0083"/>
<dbReference type="KEGG" id="nam:NAMH_0083"/>
<dbReference type="eggNOG" id="COG2022">
    <property type="taxonomic scope" value="Bacteria"/>
</dbReference>
<dbReference type="HOGENOM" id="CLU_062233_1_0_7"/>
<dbReference type="OrthoDB" id="9805935at2"/>
<dbReference type="UniPathway" id="UPA00060"/>
<dbReference type="Proteomes" id="UP000000448">
    <property type="component" value="Chromosome"/>
</dbReference>
<dbReference type="GO" id="GO:0005737">
    <property type="term" value="C:cytoplasm"/>
    <property type="evidence" value="ECO:0007669"/>
    <property type="project" value="UniProtKB-SubCell"/>
</dbReference>
<dbReference type="GO" id="GO:1990107">
    <property type="term" value="F:thiazole synthase activity"/>
    <property type="evidence" value="ECO:0007669"/>
    <property type="project" value="UniProtKB-EC"/>
</dbReference>
<dbReference type="GO" id="GO:0009229">
    <property type="term" value="P:thiamine diphosphate biosynthetic process"/>
    <property type="evidence" value="ECO:0007669"/>
    <property type="project" value="UniProtKB-UniRule"/>
</dbReference>
<dbReference type="CDD" id="cd04728">
    <property type="entry name" value="ThiG"/>
    <property type="match status" value="1"/>
</dbReference>
<dbReference type="Gene3D" id="3.20.20.70">
    <property type="entry name" value="Aldolase class I"/>
    <property type="match status" value="1"/>
</dbReference>
<dbReference type="HAMAP" id="MF_00443">
    <property type="entry name" value="ThiG"/>
    <property type="match status" value="1"/>
</dbReference>
<dbReference type="InterPro" id="IPR013785">
    <property type="entry name" value="Aldolase_TIM"/>
</dbReference>
<dbReference type="InterPro" id="IPR033983">
    <property type="entry name" value="Thiazole_synthase_ThiG"/>
</dbReference>
<dbReference type="InterPro" id="IPR008867">
    <property type="entry name" value="ThiG"/>
</dbReference>
<dbReference type="PANTHER" id="PTHR34266">
    <property type="entry name" value="THIAZOLE SYNTHASE"/>
    <property type="match status" value="1"/>
</dbReference>
<dbReference type="PANTHER" id="PTHR34266:SF2">
    <property type="entry name" value="THIAZOLE SYNTHASE"/>
    <property type="match status" value="1"/>
</dbReference>
<dbReference type="Pfam" id="PF05690">
    <property type="entry name" value="ThiG"/>
    <property type="match status" value="1"/>
</dbReference>
<dbReference type="SUPFAM" id="SSF110399">
    <property type="entry name" value="ThiG-like"/>
    <property type="match status" value="1"/>
</dbReference>
<accession>B9L7B6</accession>
<keyword id="KW-0963">Cytoplasm</keyword>
<keyword id="KW-0704">Schiff base</keyword>
<keyword id="KW-0784">Thiamine biosynthesis</keyword>
<keyword id="KW-0808">Transferase</keyword>
<proteinExistence type="inferred from homology"/>
<reference key="1">
    <citation type="journal article" date="2009" name="PLoS Genet.">
        <title>Adaptations to submarine hydrothermal environments exemplified by the genome of Nautilia profundicola.</title>
        <authorList>
            <person name="Campbell B.J."/>
            <person name="Smith J.L."/>
            <person name="Hanson T.E."/>
            <person name="Klotz M.G."/>
            <person name="Stein L.Y."/>
            <person name="Lee C.K."/>
            <person name="Wu D."/>
            <person name="Robinson J.M."/>
            <person name="Khouri H.M."/>
            <person name="Eisen J.A."/>
            <person name="Cary S.C."/>
        </authorList>
    </citation>
    <scope>NUCLEOTIDE SEQUENCE [LARGE SCALE GENOMIC DNA]</scope>
    <source>
        <strain>ATCC BAA-1463 / DSM 18972 / AmH</strain>
    </source>
</reference>
<name>THIG_NAUPA</name>
<evidence type="ECO:0000255" key="1">
    <source>
        <dbReference type="HAMAP-Rule" id="MF_00443"/>
    </source>
</evidence>
<organism>
    <name type="scientific">Nautilia profundicola (strain ATCC BAA-1463 / DSM 18972 / AmH)</name>
    <dbReference type="NCBI Taxonomy" id="598659"/>
    <lineage>
        <taxon>Bacteria</taxon>
        <taxon>Pseudomonadati</taxon>
        <taxon>Campylobacterota</taxon>
        <taxon>Epsilonproteobacteria</taxon>
        <taxon>Nautiliales</taxon>
        <taxon>Nautiliaceae</taxon>
        <taxon>Nautilia</taxon>
    </lineage>
</organism>